<accession>F7F3Q2</accession>
<accession>A6K4K3</accession>
<accession>Q6AYH7</accession>
<evidence type="ECO:0000250" key="1">
    <source>
        <dbReference type="UniProtKB" id="G5E8A8"/>
    </source>
</evidence>
<evidence type="ECO:0000250" key="2">
    <source>
        <dbReference type="UniProtKB" id="Q96M29"/>
    </source>
</evidence>
<evidence type="ECO:0000255" key="3"/>
<evidence type="ECO:0000269" key="4">
    <source>
    </source>
</evidence>
<evidence type="ECO:0000303" key="5">
    <source>
    </source>
</evidence>
<evidence type="ECO:0000305" key="6"/>
<evidence type="ECO:0000305" key="7">
    <source>
    </source>
</evidence>
<evidence type="ECO:0000312" key="8">
    <source>
        <dbReference type="RGD" id="1307081"/>
    </source>
</evidence>
<reference key="1">
    <citation type="journal article" date="2008" name="Mol. Reprod. Dev.">
        <title>Tektin5, a new Tektin family member, is a component of the middle piece of flagella in rat spermatozoa.</title>
        <authorList>
            <person name="Murayama E."/>
            <person name="Yamamoto E."/>
            <person name="Kaneko T."/>
            <person name="Shibata Y."/>
            <person name="Inai T."/>
            <person name="Iida H."/>
        </authorList>
    </citation>
    <scope>NUCLEOTIDE SEQUENCE [MRNA]</scope>
    <scope>FUNCTION</scope>
    <scope>SUBCELLULAR LOCATION</scope>
    <scope>TISSUE SPECIFICITY</scope>
</reference>
<reference key="2">
    <citation type="journal article" date="2004" name="Nature">
        <title>Genome sequence of the Brown Norway rat yields insights into mammalian evolution.</title>
        <authorList>
            <person name="Gibbs R.A."/>
            <person name="Weinstock G.M."/>
            <person name="Metzker M.L."/>
            <person name="Muzny D.M."/>
            <person name="Sodergren E.J."/>
            <person name="Scherer S."/>
            <person name="Scott G."/>
            <person name="Steffen D."/>
            <person name="Worley K.C."/>
            <person name="Burch P.E."/>
            <person name="Okwuonu G."/>
            <person name="Hines S."/>
            <person name="Lewis L."/>
            <person name="Deramo C."/>
            <person name="Delgado O."/>
            <person name="Dugan-Rocha S."/>
            <person name="Miner G."/>
            <person name="Morgan M."/>
            <person name="Hawes A."/>
            <person name="Gill R."/>
            <person name="Holt R.A."/>
            <person name="Adams M.D."/>
            <person name="Amanatides P.G."/>
            <person name="Baden-Tillson H."/>
            <person name="Barnstead M."/>
            <person name="Chin S."/>
            <person name="Evans C.A."/>
            <person name="Ferriera S."/>
            <person name="Fosler C."/>
            <person name="Glodek A."/>
            <person name="Gu Z."/>
            <person name="Jennings D."/>
            <person name="Kraft C.L."/>
            <person name="Nguyen T."/>
            <person name="Pfannkoch C.M."/>
            <person name="Sitter C."/>
            <person name="Sutton G.G."/>
            <person name="Venter J.C."/>
            <person name="Woodage T."/>
            <person name="Smith D."/>
            <person name="Lee H.-M."/>
            <person name="Gustafson E."/>
            <person name="Cahill P."/>
            <person name="Kana A."/>
            <person name="Doucette-Stamm L."/>
            <person name="Weinstock K."/>
            <person name="Fechtel K."/>
            <person name="Weiss R.B."/>
            <person name="Dunn D.M."/>
            <person name="Green E.D."/>
            <person name="Blakesley R.W."/>
            <person name="Bouffard G.G."/>
            <person name="De Jong P.J."/>
            <person name="Osoegawa K."/>
            <person name="Zhu B."/>
            <person name="Marra M."/>
            <person name="Schein J."/>
            <person name="Bosdet I."/>
            <person name="Fjell C."/>
            <person name="Jones S."/>
            <person name="Krzywinski M."/>
            <person name="Mathewson C."/>
            <person name="Siddiqui A."/>
            <person name="Wye N."/>
            <person name="McPherson J."/>
            <person name="Zhao S."/>
            <person name="Fraser C.M."/>
            <person name="Shetty J."/>
            <person name="Shatsman S."/>
            <person name="Geer K."/>
            <person name="Chen Y."/>
            <person name="Abramzon S."/>
            <person name="Nierman W.C."/>
            <person name="Havlak P.H."/>
            <person name="Chen R."/>
            <person name="Durbin K.J."/>
            <person name="Egan A."/>
            <person name="Ren Y."/>
            <person name="Song X.-Z."/>
            <person name="Li B."/>
            <person name="Liu Y."/>
            <person name="Qin X."/>
            <person name="Cawley S."/>
            <person name="Cooney A.J."/>
            <person name="D'Souza L.M."/>
            <person name="Martin K."/>
            <person name="Wu J.Q."/>
            <person name="Gonzalez-Garay M.L."/>
            <person name="Jackson A.R."/>
            <person name="Kalafus K.J."/>
            <person name="McLeod M.P."/>
            <person name="Milosavljevic A."/>
            <person name="Virk D."/>
            <person name="Volkov A."/>
            <person name="Wheeler D.A."/>
            <person name="Zhang Z."/>
            <person name="Bailey J.A."/>
            <person name="Eichler E.E."/>
            <person name="Tuzun E."/>
            <person name="Birney E."/>
            <person name="Mongin E."/>
            <person name="Ureta-Vidal A."/>
            <person name="Woodwark C."/>
            <person name="Zdobnov E."/>
            <person name="Bork P."/>
            <person name="Suyama M."/>
            <person name="Torrents D."/>
            <person name="Alexandersson M."/>
            <person name="Trask B.J."/>
            <person name="Young J.M."/>
            <person name="Huang H."/>
            <person name="Wang H."/>
            <person name="Xing H."/>
            <person name="Daniels S."/>
            <person name="Gietzen D."/>
            <person name="Schmidt J."/>
            <person name="Stevens K."/>
            <person name="Vitt U."/>
            <person name="Wingrove J."/>
            <person name="Camara F."/>
            <person name="Mar Alba M."/>
            <person name="Abril J.F."/>
            <person name="Guigo R."/>
            <person name="Smit A."/>
            <person name="Dubchak I."/>
            <person name="Rubin E.M."/>
            <person name="Couronne O."/>
            <person name="Poliakov A."/>
            <person name="Huebner N."/>
            <person name="Ganten D."/>
            <person name="Goesele C."/>
            <person name="Hummel O."/>
            <person name="Kreitler T."/>
            <person name="Lee Y.-A."/>
            <person name="Monti J."/>
            <person name="Schulz H."/>
            <person name="Zimdahl H."/>
            <person name="Himmelbauer H."/>
            <person name="Lehrach H."/>
            <person name="Jacob H.J."/>
            <person name="Bromberg S."/>
            <person name="Gullings-Handley J."/>
            <person name="Jensen-Seaman M.I."/>
            <person name="Kwitek A.E."/>
            <person name="Lazar J."/>
            <person name="Pasko D."/>
            <person name="Tonellato P.J."/>
            <person name="Twigger S."/>
            <person name="Ponting C.P."/>
            <person name="Duarte J.M."/>
            <person name="Rice S."/>
            <person name="Goodstadt L."/>
            <person name="Beatson S.A."/>
            <person name="Emes R.D."/>
            <person name="Winter E.E."/>
            <person name="Webber C."/>
            <person name="Brandt P."/>
            <person name="Nyakatura G."/>
            <person name="Adetobi M."/>
            <person name="Chiaromonte F."/>
            <person name="Elnitski L."/>
            <person name="Eswara P."/>
            <person name="Hardison R.C."/>
            <person name="Hou M."/>
            <person name="Kolbe D."/>
            <person name="Makova K."/>
            <person name="Miller W."/>
            <person name="Nekrutenko A."/>
            <person name="Riemer C."/>
            <person name="Schwartz S."/>
            <person name="Taylor J."/>
            <person name="Yang S."/>
            <person name="Zhang Y."/>
            <person name="Lindpaintner K."/>
            <person name="Andrews T.D."/>
            <person name="Caccamo M."/>
            <person name="Clamp M."/>
            <person name="Clarke L."/>
            <person name="Curwen V."/>
            <person name="Durbin R.M."/>
            <person name="Eyras E."/>
            <person name="Searle S.M."/>
            <person name="Cooper G.M."/>
            <person name="Batzoglou S."/>
            <person name="Brudno M."/>
            <person name="Sidow A."/>
            <person name="Stone E.A."/>
            <person name="Payseur B.A."/>
            <person name="Bourque G."/>
            <person name="Lopez-Otin C."/>
            <person name="Puente X.S."/>
            <person name="Chakrabarti K."/>
            <person name="Chatterji S."/>
            <person name="Dewey C."/>
            <person name="Pachter L."/>
            <person name="Bray N."/>
            <person name="Yap V.B."/>
            <person name="Caspi A."/>
            <person name="Tesler G."/>
            <person name="Pevzner P.A."/>
            <person name="Haussler D."/>
            <person name="Roskin K.M."/>
            <person name="Baertsch R."/>
            <person name="Clawson H."/>
            <person name="Furey T.S."/>
            <person name="Hinrichs A.S."/>
            <person name="Karolchik D."/>
            <person name="Kent W.J."/>
            <person name="Rosenbloom K.R."/>
            <person name="Trumbower H."/>
            <person name="Weirauch M."/>
            <person name="Cooper D.N."/>
            <person name="Stenson P.D."/>
            <person name="Ma B."/>
            <person name="Brent M."/>
            <person name="Arumugam M."/>
            <person name="Shteynberg D."/>
            <person name="Copley R.R."/>
            <person name="Taylor M.S."/>
            <person name="Riethman H."/>
            <person name="Mudunuri U."/>
            <person name="Peterson J."/>
            <person name="Guyer M."/>
            <person name="Felsenfeld A."/>
            <person name="Old S."/>
            <person name="Mockrin S."/>
            <person name="Collins F.S."/>
        </authorList>
    </citation>
    <scope>NUCLEOTIDE SEQUENCE [LARGE SCALE GENOMIC DNA]</scope>
    <source>
        <strain>Brown Norway</strain>
    </source>
</reference>
<organism>
    <name type="scientific">Rattus norvegicus</name>
    <name type="common">Rat</name>
    <dbReference type="NCBI Taxonomy" id="10116"/>
    <lineage>
        <taxon>Eukaryota</taxon>
        <taxon>Metazoa</taxon>
        <taxon>Chordata</taxon>
        <taxon>Craniata</taxon>
        <taxon>Vertebrata</taxon>
        <taxon>Euteleostomi</taxon>
        <taxon>Mammalia</taxon>
        <taxon>Eutheria</taxon>
        <taxon>Euarchontoglires</taxon>
        <taxon>Glires</taxon>
        <taxon>Rodentia</taxon>
        <taxon>Myomorpha</taxon>
        <taxon>Muroidea</taxon>
        <taxon>Muridae</taxon>
        <taxon>Murinae</taxon>
        <taxon>Rattus</taxon>
    </lineage>
</organism>
<proteinExistence type="evidence at transcript level"/>
<sequence>MEFLGTTQTASYCGPKKVCGLQALPPAGQDPVVQECYQPFHLPGYRYLNAWRPSVFYKITTQQTCPEECSSSRRPPTILPSLRSALFCRYTQRDWDRSNDLQLRGAEASRLWAGRLTGDSLRIMQDKDQLIHQMQEGTSRNLNQRVCDIGFWKSELCYELDRLLTESNSMDTLKRRLECAAEEMNNPLQVALECLYNREKRIGIDLVHDNVEKNLIREVDLLKCCQDQMRKLAKRIDFQIRDNRDAQHALERDIEDKSSSQYIDESCFNLRNTSDSISFFHGMEKFDGTVSIPETWAKFSNDNIRHTQNMRANSIRLREEAEHLFETLSDQLWRQFTNTNLAFNARISEETDVKNKLQTQLAKILQEIFQAENTIMLLERAIVAKECPLKVAQTRLACRTRRPNVELCRDVSQFRLVNEVFTIDDTLQTLKLRLRETQDALQLLVMTKSRLEHELAIKANTLCIDKEKCMRMRKSFPSTPRLTGYTCSGIGSGPYTNQVPRVSSCGGGASCGGGLSCGGGVACGGGASCGGSAPCGGSALCSHPVSGSCPGSCFAPVC</sequence>
<comment type="function">
    <text evidence="1 4">Sperm-specific microtubule inner protein (MIP) part of the dynein-decorated doublet microtubules (DMTs) in flagellar axoneme (PubMed:17924527). Forms an extensive interaction network in different conformations that reinforces the helix bundle composed by other tektin proteins (TEKT1 to TEKT4) and MIPs to anchor the tektin bundle onto the tubulin wall of A-tubule of the sperm flagellum (By similarity).</text>
</comment>
<comment type="subunit">
    <text evidence="1 2">Microtubule inner protein component of sperm flagellar doublet microtubules (By similarity). Interacts with TEKT3 (By similarity).</text>
</comment>
<comment type="subcellular location">
    <subcellularLocation>
        <location evidence="7">Cytoplasm</location>
        <location evidence="7">Cytoskeleton</location>
        <location evidence="7">Flagellum axoneme</location>
    </subcellularLocation>
</comment>
<comment type="tissue specificity">
    <text evidence="4">Specifically expressed in testis.</text>
</comment>
<comment type="PTM">
    <text evidence="1">Ubiquitinated, leading to its degradation. Deubiquitinated by USP16, promoting its stability.</text>
</comment>
<comment type="similarity">
    <text evidence="6">Belongs to the tektin family.</text>
</comment>
<dbReference type="EMBL" id="AB294402">
    <property type="protein sequence ID" value="BAF57906.1"/>
    <property type="molecule type" value="mRNA"/>
</dbReference>
<dbReference type="EMBL" id="BC079040">
    <property type="protein sequence ID" value="AAH79040.1"/>
    <property type="molecule type" value="mRNA"/>
</dbReference>
<dbReference type="RefSeq" id="NP_001014246.1">
    <property type="nucleotide sequence ID" value="NM_001014224.3"/>
</dbReference>
<dbReference type="SMR" id="F7F3Q2"/>
<dbReference type="FunCoup" id="F7F3Q2">
    <property type="interactions" value="16"/>
</dbReference>
<dbReference type="PhosphoSitePlus" id="F7F3Q2"/>
<dbReference type="PaxDb" id="10116-ENSRNOP00000003465"/>
<dbReference type="Ensembl" id="ENSRNOT00055030625">
    <property type="protein sequence ID" value="ENSRNOP00055024646"/>
    <property type="gene ID" value="ENSRNOG00055018080"/>
</dbReference>
<dbReference type="Ensembl" id="ENSRNOT00060022032">
    <property type="protein sequence ID" value="ENSRNOP00060017448"/>
    <property type="gene ID" value="ENSRNOG00060012948"/>
</dbReference>
<dbReference type="Ensembl" id="ENSRNOT00065003966">
    <property type="protein sequence ID" value="ENSRNOP00065002821"/>
    <property type="gene ID" value="ENSRNOG00065002856"/>
</dbReference>
<dbReference type="GeneID" id="363538"/>
<dbReference type="KEGG" id="rno:363538"/>
<dbReference type="UCSC" id="RGD:1307081">
    <property type="organism name" value="rat"/>
</dbReference>
<dbReference type="AGR" id="RGD:1307081"/>
<dbReference type="CTD" id="146279"/>
<dbReference type="RGD" id="1307081">
    <property type="gene designation" value="Tekt5"/>
</dbReference>
<dbReference type="VEuPathDB" id="HostDB:ENSRNOG00000002571"/>
<dbReference type="eggNOG" id="KOG2685">
    <property type="taxonomic scope" value="Eukaryota"/>
</dbReference>
<dbReference type="HOGENOM" id="CLU_033588_2_0_1"/>
<dbReference type="OMA" id="QESYQPY"/>
<dbReference type="OrthoDB" id="9886517at2759"/>
<dbReference type="TreeFam" id="TF320754"/>
<dbReference type="Proteomes" id="UP000002494">
    <property type="component" value="Chromosome 10"/>
</dbReference>
<dbReference type="Bgee" id="ENSRNOG00000002571">
    <property type="expression patterns" value="Expressed in testis and 5 other cell types or tissues"/>
</dbReference>
<dbReference type="GO" id="GO:0160111">
    <property type="term" value="C:axonemal A tubule inner sheath"/>
    <property type="evidence" value="ECO:0000314"/>
    <property type="project" value="UniProtKB"/>
</dbReference>
<dbReference type="GO" id="GO:0015630">
    <property type="term" value="C:microtubule cytoskeleton"/>
    <property type="evidence" value="ECO:0000318"/>
    <property type="project" value="GO_Central"/>
</dbReference>
<dbReference type="GO" id="GO:0036126">
    <property type="term" value="C:sperm flagellum"/>
    <property type="evidence" value="ECO:0000314"/>
    <property type="project" value="UniProtKB"/>
</dbReference>
<dbReference type="GO" id="GO:0060271">
    <property type="term" value="P:cilium assembly"/>
    <property type="evidence" value="ECO:0000318"/>
    <property type="project" value="GO_Central"/>
</dbReference>
<dbReference type="GO" id="GO:0060294">
    <property type="term" value="P:cilium movement involved in cell motility"/>
    <property type="evidence" value="ECO:0000318"/>
    <property type="project" value="GO_Central"/>
</dbReference>
<dbReference type="GO" id="GO:0030317">
    <property type="term" value="P:flagellated sperm motility"/>
    <property type="evidence" value="ECO:0000314"/>
    <property type="project" value="UniProtKB"/>
</dbReference>
<dbReference type="InterPro" id="IPR048256">
    <property type="entry name" value="Tektin-like"/>
</dbReference>
<dbReference type="InterPro" id="IPR000435">
    <property type="entry name" value="Tektins"/>
</dbReference>
<dbReference type="PANTHER" id="PTHR19960">
    <property type="entry name" value="TEKTIN"/>
    <property type="match status" value="1"/>
</dbReference>
<dbReference type="PANTHER" id="PTHR19960:SF23">
    <property type="entry name" value="TEKTIN-5"/>
    <property type="match status" value="1"/>
</dbReference>
<dbReference type="Pfam" id="PF03148">
    <property type="entry name" value="Tektin"/>
    <property type="match status" value="1"/>
</dbReference>
<dbReference type="PRINTS" id="PR00511">
    <property type="entry name" value="TEKTIN"/>
</dbReference>
<protein>
    <recommendedName>
        <fullName evidence="5">Tektin-5</fullName>
    </recommendedName>
</protein>
<keyword id="KW-0966">Cell projection</keyword>
<keyword id="KW-0969">Cilium</keyword>
<keyword id="KW-0175">Coiled coil</keyword>
<keyword id="KW-0963">Cytoplasm</keyword>
<keyword id="KW-0206">Cytoskeleton</keyword>
<keyword id="KW-0282">Flagellum</keyword>
<keyword id="KW-1185">Reference proteome</keyword>
<keyword id="KW-0832">Ubl conjugation</keyword>
<feature type="chain" id="PRO_0000461079" description="Tektin-5">
    <location>
        <begin position="1"/>
        <end position="558"/>
    </location>
</feature>
<feature type="coiled-coil region" evidence="3">
    <location>
        <begin position="347"/>
        <end position="381"/>
    </location>
</feature>
<name>TEKT5_RAT</name>
<gene>
    <name evidence="8" type="primary">Tekt5</name>
</gene>